<organism>
    <name type="scientific">Rhizobium meliloti</name>
    <name type="common">Ensifer meliloti</name>
    <name type="synonym">Sinorhizobium meliloti</name>
    <dbReference type="NCBI Taxonomy" id="382"/>
    <lineage>
        <taxon>Bacteria</taxon>
        <taxon>Pseudomonadati</taxon>
        <taxon>Pseudomonadota</taxon>
        <taxon>Alphaproteobacteria</taxon>
        <taxon>Hyphomicrobiales</taxon>
        <taxon>Rhizobiaceae</taxon>
        <taxon>Sinorhizobium/Ensifer group</taxon>
        <taxon>Sinorhizobium</taxon>
    </lineage>
</organism>
<reference key="1">
    <citation type="journal article" date="1999" name="J. Bacteriol.">
        <title>Genes coding for phosphotransacetylase and acetate kinase in Sinorhizobium meliloti are in an operon that is inducible by phosphate stress and controlled by phoB.</title>
        <authorList>
            <person name="Summers M.L."/>
            <person name="Denton M.C."/>
            <person name="McDermott T.R."/>
        </authorList>
    </citation>
    <scope>NUCLEOTIDE SEQUENCE [GENOMIC DNA]</scope>
    <source>
        <strain>104A14</strain>
    </source>
</reference>
<proteinExistence type="predicted"/>
<sequence>MPEQSSIPTIPTLSDAYTYALDAWQRSILFLDVMRQRGAQYEEHTAQTAPNVLDYEAELVCDGRKLDRPVNYALVRIVPPAGAVIDPLKKPFVVVDPRAGHGPGIGGFKADSEIGVAIKAGHACYFIGFLPEPVPGQTIEDITRSEAIFLETVIARHPDADGKPCVIGNCQAGWAVMILASLRPELFGPIIIAGAPLSYWAGIRGQYPMRYSGGLLGGSWLTALTGDLGAGIFDGAWLVQNFENQNPANTLWTKQYNLYSKVDTEAGRYLGFERWWGGHVRLNAEEMQFIVDELFVGNKLAAGKIQTSDGTTIDMRNIRSPIVVFCSKGDNITPPAQALDWILDLHDSVDEIRAHGQTIVYTVHEKIGHLGIFVSAGVARKEHDEFASNIDLIDVLPPGLYEAVLEPVGPAVENPDLVSGEWIMRCEARTLDDIRAFGGNDLEDDRRFAAAARVSEINLALYRTYLQPWIKGMVTPPMAEAMRSMHPLRLQYEVFGPGNPVMAWVEAAAGLIRDARQPVAPDNPLLALQENMSRQVVDGLEAWRQMVEHLSEQKFREIYGAPALQAALGIDTQTDRPPRQAAKNCWHHALLENKIAALKADMAKGGIREALARALLFVGMARGRVDERGFEAVRRLRRAHPSAKQLTLAEFKALMRTQYFMLLVDEEAALAAIPKLLPEKIEERGAAFAALREVLEAPGLLTGIAAERLQSVKALFGLSGEAPVPLMVRKVAR</sequence>
<dbReference type="EMBL" id="AF095903">
    <property type="protein sequence ID" value="AAD24356.1"/>
    <property type="molecule type" value="Genomic_DNA"/>
</dbReference>
<dbReference type="ESTHER" id="rhime-yack">
    <property type="family name" value="Duf_3141"/>
</dbReference>
<dbReference type="GO" id="GO:0016020">
    <property type="term" value="C:membrane"/>
    <property type="evidence" value="ECO:0007669"/>
    <property type="project" value="UniProtKB-SubCell"/>
</dbReference>
<dbReference type="Gene3D" id="3.40.50.1820">
    <property type="entry name" value="alpha/beta hydrolase"/>
    <property type="match status" value="1"/>
</dbReference>
<dbReference type="InterPro" id="IPR029058">
    <property type="entry name" value="AB_hydrolase_fold"/>
</dbReference>
<dbReference type="InterPro" id="IPR024501">
    <property type="entry name" value="DUF3141"/>
</dbReference>
<dbReference type="InterPro" id="IPR051321">
    <property type="entry name" value="PHA/PHB_synthase"/>
</dbReference>
<dbReference type="PANTHER" id="PTHR36837">
    <property type="entry name" value="POLY(3-HYDROXYALKANOATE) POLYMERASE SUBUNIT PHAC"/>
    <property type="match status" value="1"/>
</dbReference>
<dbReference type="PANTHER" id="PTHR36837:SF2">
    <property type="entry name" value="POLY(3-HYDROXYALKANOATE) POLYMERASE SUBUNIT PHAC"/>
    <property type="match status" value="1"/>
</dbReference>
<dbReference type="Pfam" id="PF11339">
    <property type="entry name" value="DUF3141"/>
    <property type="match status" value="1"/>
</dbReference>
<dbReference type="SUPFAM" id="SSF53474">
    <property type="entry name" value="alpha/beta-Hydrolases"/>
    <property type="match status" value="1"/>
</dbReference>
<comment type="subcellular location">
    <subcellularLocation>
        <location evidence="2">Membrane</location>
        <topology evidence="2">Single-pass membrane protein</topology>
    </subcellularLocation>
</comment>
<keyword id="KW-0472">Membrane</keyword>
<keyword id="KW-0812">Transmembrane</keyword>
<keyword id="KW-1133">Transmembrane helix</keyword>
<evidence type="ECO:0000255" key="1"/>
<evidence type="ECO:0000305" key="2"/>
<accession>Q9X447</accession>
<feature type="chain" id="PRO_0000160648" description="Uncharacterized protein in ackA 5'region">
    <location>
        <begin position="1"/>
        <end position="733"/>
    </location>
</feature>
<feature type="transmembrane region" description="Helical" evidence="1">
    <location>
        <begin position="174"/>
        <end position="194"/>
    </location>
</feature>
<name>YACK_RHIML</name>
<protein>
    <recommendedName>
        <fullName>Uncharacterized protein in ackA 5'region</fullName>
    </recommendedName>
    <alternativeName>
        <fullName>ORFA</fullName>
    </alternativeName>
</protein>